<dbReference type="EC" id="3.4.25.2" evidence="1"/>
<dbReference type="EMBL" id="AP008230">
    <property type="protein sequence ID" value="BAE84339.1"/>
    <property type="molecule type" value="Genomic_DNA"/>
</dbReference>
<dbReference type="RefSeq" id="WP_011460420.1">
    <property type="nucleotide sequence ID" value="NC_007907.1"/>
</dbReference>
<dbReference type="SMR" id="Q24UF3"/>
<dbReference type="STRING" id="138119.DSY2550"/>
<dbReference type="MEROPS" id="T01.007"/>
<dbReference type="KEGG" id="dsy:DSY2550"/>
<dbReference type="eggNOG" id="COG5405">
    <property type="taxonomic scope" value="Bacteria"/>
</dbReference>
<dbReference type="HOGENOM" id="CLU_093872_1_1_9"/>
<dbReference type="Proteomes" id="UP000001946">
    <property type="component" value="Chromosome"/>
</dbReference>
<dbReference type="GO" id="GO:0009376">
    <property type="term" value="C:HslUV protease complex"/>
    <property type="evidence" value="ECO:0007669"/>
    <property type="project" value="UniProtKB-UniRule"/>
</dbReference>
<dbReference type="GO" id="GO:0005839">
    <property type="term" value="C:proteasome core complex"/>
    <property type="evidence" value="ECO:0007669"/>
    <property type="project" value="InterPro"/>
</dbReference>
<dbReference type="GO" id="GO:0046872">
    <property type="term" value="F:metal ion binding"/>
    <property type="evidence" value="ECO:0007669"/>
    <property type="project" value="UniProtKB-KW"/>
</dbReference>
<dbReference type="GO" id="GO:0004298">
    <property type="term" value="F:threonine-type endopeptidase activity"/>
    <property type="evidence" value="ECO:0007669"/>
    <property type="project" value="UniProtKB-KW"/>
</dbReference>
<dbReference type="GO" id="GO:0051603">
    <property type="term" value="P:proteolysis involved in protein catabolic process"/>
    <property type="evidence" value="ECO:0007669"/>
    <property type="project" value="InterPro"/>
</dbReference>
<dbReference type="CDD" id="cd01913">
    <property type="entry name" value="protease_HslV"/>
    <property type="match status" value="1"/>
</dbReference>
<dbReference type="FunFam" id="3.60.20.10:FF:000002">
    <property type="entry name" value="ATP-dependent protease subunit HslV"/>
    <property type="match status" value="1"/>
</dbReference>
<dbReference type="Gene3D" id="3.60.20.10">
    <property type="entry name" value="Glutamine Phosphoribosylpyrophosphate, subunit 1, domain 1"/>
    <property type="match status" value="1"/>
</dbReference>
<dbReference type="HAMAP" id="MF_00248">
    <property type="entry name" value="HslV"/>
    <property type="match status" value="1"/>
</dbReference>
<dbReference type="InterPro" id="IPR022281">
    <property type="entry name" value="ATP-dep_Prtase_HsIV_su"/>
</dbReference>
<dbReference type="InterPro" id="IPR029055">
    <property type="entry name" value="Ntn_hydrolases_N"/>
</dbReference>
<dbReference type="InterPro" id="IPR001353">
    <property type="entry name" value="Proteasome_sua/b"/>
</dbReference>
<dbReference type="InterPro" id="IPR023333">
    <property type="entry name" value="Proteasome_suB-type"/>
</dbReference>
<dbReference type="NCBIfam" id="TIGR03692">
    <property type="entry name" value="ATP_dep_HslV"/>
    <property type="match status" value="1"/>
</dbReference>
<dbReference type="NCBIfam" id="NF003964">
    <property type="entry name" value="PRK05456.1"/>
    <property type="match status" value="1"/>
</dbReference>
<dbReference type="PANTHER" id="PTHR32194:SF0">
    <property type="entry name" value="ATP-DEPENDENT PROTEASE SUBUNIT HSLV"/>
    <property type="match status" value="1"/>
</dbReference>
<dbReference type="PANTHER" id="PTHR32194">
    <property type="entry name" value="METALLOPROTEASE TLDD"/>
    <property type="match status" value="1"/>
</dbReference>
<dbReference type="Pfam" id="PF00227">
    <property type="entry name" value="Proteasome"/>
    <property type="match status" value="1"/>
</dbReference>
<dbReference type="PIRSF" id="PIRSF039093">
    <property type="entry name" value="HslV"/>
    <property type="match status" value="1"/>
</dbReference>
<dbReference type="SUPFAM" id="SSF56235">
    <property type="entry name" value="N-terminal nucleophile aminohydrolases (Ntn hydrolases)"/>
    <property type="match status" value="1"/>
</dbReference>
<dbReference type="PROSITE" id="PS51476">
    <property type="entry name" value="PROTEASOME_BETA_2"/>
    <property type="match status" value="1"/>
</dbReference>
<comment type="function">
    <text evidence="1">Protease subunit of a proteasome-like degradation complex believed to be a general protein degrading machinery.</text>
</comment>
<comment type="catalytic activity">
    <reaction evidence="1">
        <text>ATP-dependent cleavage of peptide bonds with broad specificity.</text>
        <dbReference type="EC" id="3.4.25.2"/>
    </reaction>
</comment>
<comment type="activity regulation">
    <text evidence="1">Allosterically activated by HslU binding.</text>
</comment>
<comment type="subunit">
    <text evidence="1">A double ring-shaped homohexamer of HslV is capped on each side by a ring-shaped HslU homohexamer. The assembly of the HslU/HslV complex is dependent on binding of ATP.</text>
</comment>
<comment type="subcellular location">
    <subcellularLocation>
        <location evidence="1">Cytoplasm</location>
    </subcellularLocation>
</comment>
<comment type="similarity">
    <text evidence="1">Belongs to the peptidase T1B family. HslV subfamily.</text>
</comment>
<organism>
    <name type="scientific">Desulfitobacterium hafniense (strain Y51)</name>
    <dbReference type="NCBI Taxonomy" id="138119"/>
    <lineage>
        <taxon>Bacteria</taxon>
        <taxon>Bacillati</taxon>
        <taxon>Bacillota</taxon>
        <taxon>Clostridia</taxon>
        <taxon>Eubacteriales</taxon>
        <taxon>Desulfitobacteriaceae</taxon>
        <taxon>Desulfitobacterium</taxon>
    </lineage>
</organism>
<protein>
    <recommendedName>
        <fullName evidence="1">ATP-dependent protease subunit HslV</fullName>
        <ecNumber evidence="1">3.4.25.2</ecNumber>
    </recommendedName>
</protein>
<reference key="1">
    <citation type="journal article" date="2006" name="J. Bacteriol.">
        <title>Complete genome sequence of the dehalorespiring bacterium Desulfitobacterium hafniense Y51 and comparison with Dehalococcoides ethenogenes 195.</title>
        <authorList>
            <person name="Nonaka H."/>
            <person name="Keresztes G."/>
            <person name="Shinoda Y."/>
            <person name="Ikenaga Y."/>
            <person name="Abe M."/>
            <person name="Naito K."/>
            <person name="Inatomi K."/>
            <person name="Furukawa K."/>
            <person name="Inui M."/>
            <person name="Yukawa H."/>
        </authorList>
    </citation>
    <scope>NUCLEOTIDE SEQUENCE [LARGE SCALE GENOMIC DNA]</scope>
    <source>
        <strain>Y51</strain>
    </source>
</reference>
<feature type="chain" id="PRO_0000336771" description="ATP-dependent protease subunit HslV">
    <location>
        <begin position="1"/>
        <end position="176"/>
    </location>
</feature>
<feature type="active site" evidence="1">
    <location>
        <position position="5"/>
    </location>
</feature>
<feature type="binding site" evidence="1">
    <location>
        <position position="161"/>
    </location>
    <ligand>
        <name>Na(+)</name>
        <dbReference type="ChEBI" id="CHEBI:29101"/>
    </ligand>
</feature>
<feature type="binding site" evidence="1">
    <location>
        <position position="164"/>
    </location>
    <ligand>
        <name>Na(+)</name>
        <dbReference type="ChEBI" id="CHEBI:29101"/>
    </ligand>
</feature>
<feature type="binding site" evidence="1">
    <location>
        <position position="167"/>
    </location>
    <ligand>
        <name>Na(+)</name>
        <dbReference type="ChEBI" id="CHEBI:29101"/>
    </ligand>
</feature>
<name>HSLV_DESHY</name>
<gene>
    <name evidence="1" type="primary">hslV</name>
    <name type="ordered locus">DSY2550</name>
</gene>
<evidence type="ECO:0000255" key="1">
    <source>
        <dbReference type="HAMAP-Rule" id="MF_00248"/>
    </source>
</evidence>
<sequence length="176" mass="19008">MFHATTIVAVKKGEQVAMAGDGQVTMGQATVMKHKARKVRRLFHGKVLAGFAGSVADAFTLFEKFENKLEEYQGNLQRAAVELAKDWRMDKALRNLEALLIVADKQSMLLISGSGEVIEPDDGIAAIGSGGNYALAAARALVKNTDLQPAQLVQEAMEVASSICVYTNDQIIVEEL</sequence>
<accession>Q24UF3</accession>
<proteinExistence type="inferred from homology"/>
<keyword id="KW-0021">Allosteric enzyme</keyword>
<keyword id="KW-0963">Cytoplasm</keyword>
<keyword id="KW-0378">Hydrolase</keyword>
<keyword id="KW-0479">Metal-binding</keyword>
<keyword id="KW-0645">Protease</keyword>
<keyword id="KW-1185">Reference proteome</keyword>
<keyword id="KW-0915">Sodium</keyword>
<keyword id="KW-0888">Threonine protease</keyword>